<organism>
    <name type="scientific">Orientia tsutsugamushi (strain Ikeda)</name>
    <name type="common">Rickettsia tsutsugamushi</name>
    <dbReference type="NCBI Taxonomy" id="334380"/>
    <lineage>
        <taxon>Bacteria</taxon>
        <taxon>Pseudomonadati</taxon>
        <taxon>Pseudomonadota</taxon>
        <taxon>Alphaproteobacteria</taxon>
        <taxon>Rickettsiales</taxon>
        <taxon>Rickettsiaceae</taxon>
        <taxon>Rickettsieae</taxon>
        <taxon>Orientia</taxon>
    </lineage>
</organism>
<reference key="1">
    <citation type="journal article" date="2008" name="DNA Res.">
        <title>The whole-genome sequencing of the obligate intracellular bacterium Orientia tsutsugamushi revealed massive gene amplification during reductive genome evolution.</title>
        <authorList>
            <person name="Nakayama K."/>
            <person name="Yamashita A."/>
            <person name="Kurokawa K."/>
            <person name="Morimoto T."/>
            <person name="Ogawa M."/>
            <person name="Fukuhara M."/>
            <person name="Urakami H."/>
            <person name="Ohnishi M."/>
            <person name="Uchiyama I."/>
            <person name="Ogura Y."/>
            <person name="Ooka T."/>
            <person name="Oshima K."/>
            <person name="Tamura A."/>
            <person name="Hattori M."/>
            <person name="Hayashi T."/>
        </authorList>
    </citation>
    <scope>NUCLEOTIDE SEQUENCE [LARGE SCALE GENOMIC DNA]</scope>
    <source>
        <strain>Ikeda</strain>
    </source>
</reference>
<gene>
    <name evidence="1" type="primary">tolB</name>
    <name type="ordered locus">OTT_1545</name>
</gene>
<evidence type="ECO:0000255" key="1">
    <source>
        <dbReference type="HAMAP-Rule" id="MF_00671"/>
    </source>
</evidence>
<proteinExistence type="inferred from homology"/>
<comment type="function">
    <text evidence="1">Part of the Tol-Pal system, which plays a role in outer membrane invagination during cell division and is important for maintaining outer membrane integrity.</text>
</comment>
<comment type="subunit">
    <text evidence="1">The Tol-Pal system is composed of five core proteins: the inner membrane proteins TolA, TolQ and TolR, the periplasmic protein TolB and the outer membrane protein Pal. They form a network linking the inner and outer membranes and the peptidoglycan layer.</text>
</comment>
<comment type="subcellular location">
    <subcellularLocation>
        <location evidence="1">Periplasm</location>
    </subcellularLocation>
</comment>
<comment type="similarity">
    <text evidence="1">Belongs to the TolB family.</text>
</comment>
<sequence>MINNLSISMTKVIKIILAIIIILFNTLSIFANTTTLSPIKITKGNCTQIPIAINFFAAKSNEEHGLSQNIVSIISNDLNISKIFAPISSDLFIETEQGVAHIPLFTAWSQINANILINGEITKIDSTDFKVTFVVWDVFSAKEITRKSFTFPSQLWRSTAHKIADQIYKHVTGSKGNFNTKIVYVSESNSSKGKIRRIAIMDQDGANHNYITNGKNHVITPVFSPNNNQILYVSYHNKIPTVRIHDLNSGNNKILASFNGITFSPRFSPDGNKILVSNSSTKNVTHIYEINLLTGKIKQLTKGQSINTSPSYSPDGSKIAFVSDRSGSTQIYIMNDQGGNIKRLTSQPGAYTTPAWSPTNNYIAFTKIEAGEFSIGVIKLDGSNKRIIATKHLVEGPSWAPDGKTIIFSRAYKATKSTSTKVKLYSVDCTGYNEREIQTPENASDPNWSNEYE</sequence>
<feature type="signal peptide" evidence="1">
    <location>
        <begin position="1"/>
        <end position="31"/>
    </location>
</feature>
<feature type="chain" id="PRO_1000131533" description="Tol-Pal system protein TolB">
    <location>
        <begin position="32"/>
        <end position="453"/>
    </location>
</feature>
<accession>B3CUF6</accession>
<protein>
    <recommendedName>
        <fullName evidence="1">Tol-Pal system protein TolB</fullName>
    </recommendedName>
</protein>
<keyword id="KW-0131">Cell cycle</keyword>
<keyword id="KW-0132">Cell division</keyword>
<keyword id="KW-0574">Periplasm</keyword>
<keyword id="KW-0732">Signal</keyword>
<name>TOLB_ORITI</name>
<dbReference type="EMBL" id="AP008981">
    <property type="protein sequence ID" value="BAG41003.1"/>
    <property type="molecule type" value="Genomic_DNA"/>
</dbReference>
<dbReference type="RefSeq" id="WP_012462010.1">
    <property type="nucleotide sequence ID" value="NC_010793.1"/>
</dbReference>
<dbReference type="SMR" id="B3CUF6"/>
<dbReference type="KEGG" id="ott:OTT_1545"/>
<dbReference type="HOGENOM" id="CLU_047123_0_0_5"/>
<dbReference type="OrthoDB" id="9802240at2"/>
<dbReference type="Proteomes" id="UP000001033">
    <property type="component" value="Chromosome"/>
</dbReference>
<dbReference type="GO" id="GO:0042597">
    <property type="term" value="C:periplasmic space"/>
    <property type="evidence" value="ECO:0007669"/>
    <property type="project" value="UniProtKB-SubCell"/>
</dbReference>
<dbReference type="GO" id="GO:0051301">
    <property type="term" value="P:cell division"/>
    <property type="evidence" value="ECO:0007669"/>
    <property type="project" value="UniProtKB-UniRule"/>
</dbReference>
<dbReference type="GO" id="GO:0017038">
    <property type="term" value="P:protein import"/>
    <property type="evidence" value="ECO:0007669"/>
    <property type="project" value="InterPro"/>
</dbReference>
<dbReference type="Gene3D" id="2.120.10.30">
    <property type="entry name" value="TolB, C-terminal domain"/>
    <property type="match status" value="1"/>
</dbReference>
<dbReference type="Gene3D" id="3.40.50.10070">
    <property type="entry name" value="TolB, N-terminal domain"/>
    <property type="match status" value="1"/>
</dbReference>
<dbReference type="HAMAP" id="MF_00671">
    <property type="entry name" value="TolB"/>
    <property type="match status" value="1"/>
</dbReference>
<dbReference type="InterPro" id="IPR011042">
    <property type="entry name" value="6-blade_b-propeller_TolB-like"/>
</dbReference>
<dbReference type="InterPro" id="IPR011659">
    <property type="entry name" value="PD40"/>
</dbReference>
<dbReference type="InterPro" id="IPR014167">
    <property type="entry name" value="Tol-Pal_TolB"/>
</dbReference>
<dbReference type="InterPro" id="IPR007195">
    <property type="entry name" value="TolB_N"/>
</dbReference>
<dbReference type="NCBIfam" id="TIGR02800">
    <property type="entry name" value="propeller_TolB"/>
    <property type="match status" value="1"/>
</dbReference>
<dbReference type="PANTHER" id="PTHR36842:SF1">
    <property type="entry name" value="PROTEIN TOLB"/>
    <property type="match status" value="1"/>
</dbReference>
<dbReference type="PANTHER" id="PTHR36842">
    <property type="entry name" value="PROTEIN TOLB HOMOLOG"/>
    <property type="match status" value="1"/>
</dbReference>
<dbReference type="Pfam" id="PF07676">
    <property type="entry name" value="PD40"/>
    <property type="match status" value="5"/>
</dbReference>
<dbReference type="Pfam" id="PF04052">
    <property type="entry name" value="TolB_N"/>
    <property type="match status" value="1"/>
</dbReference>
<dbReference type="SUPFAM" id="SSF52964">
    <property type="entry name" value="TolB, N-terminal domain"/>
    <property type="match status" value="1"/>
</dbReference>
<dbReference type="SUPFAM" id="SSF69304">
    <property type="entry name" value="Tricorn protease N-terminal domain"/>
    <property type="match status" value="1"/>
</dbReference>